<evidence type="ECO:0000255" key="1">
    <source>
        <dbReference type="HAMAP-Rule" id="MF_00206"/>
    </source>
</evidence>
<evidence type="ECO:0000255" key="2">
    <source>
        <dbReference type="PROSITE-ProRule" id="PRU01266"/>
    </source>
</evidence>
<sequence length="320" mass="36292">MGTPFKMERGVKYRDAAKTSIIKVTNIDPDRELLQKPSWMKIKLPASSAKIDSIKNGMRRHGLHSVCEEASCPNLHECFNHGTATFMILGAICTRRCPFCDVAHGKPLPPDPEEPRKLAETIQDMKLKYVVITSVDRDDLPDRGAGHFADCVREIRALNPEIKIEILVPDFRGRIELALEKLKNNPPDVFNHNLENIPRLYREIRPGADYEWSLKLLREFKAMFPHIPTKSGLMVGLGENNEEILQVMRDLRTNGVTMLTLGQYLQPSRYHLPVARYVSPEEFDEFREKAAEMGFEHAACGPFVRSSYHADLQASGGLVK</sequence>
<proteinExistence type="inferred from homology"/>
<gene>
    <name evidence="1" type="primary">lipA</name>
    <name type="ordered locus">Asuc_0703</name>
</gene>
<reference key="1">
    <citation type="journal article" date="2010" name="BMC Genomics">
        <title>A genomic perspective on the potential of Actinobacillus succinogenes for industrial succinate production.</title>
        <authorList>
            <person name="McKinlay J.B."/>
            <person name="Laivenieks M."/>
            <person name="Schindler B.D."/>
            <person name="McKinlay A.A."/>
            <person name="Siddaramappa S."/>
            <person name="Challacombe J.F."/>
            <person name="Lowry S.R."/>
            <person name="Clum A."/>
            <person name="Lapidus A.L."/>
            <person name="Burkhart K.B."/>
            <person name="Harkins V."/>
            <person name="Vieille C."/>
        </authorList>
    </citation>
    <scope>NUCLEOTIDE SEQUENCE [LARGE SCALE GENOMIC DNA]</scope>
    <source>
        <strain>ATCC 55618 / DSM 22257 / CCUG 43843 / 130Z</strain>
    </source>
</reference>
<organism>
    <name type="scientific">Actinobacillus succinogenes (strain ATCC 55618 / DSM 22257 / CCUG 43843 / 130Z)</name>
    <dbReference type="NCBI Taxonomy" id="339671"/>
    <lineage>
        <taxon>Bacteria</taxon>
        <taxon>Pseudomonadati</taxon>
        <taxon>Pseudomonadota</taxon>
        <taxon>Gammaproteobacteria</taxon>
        <taxon>Pasteurellales</taxon>
        <taxon>Pasteurellaceae</taxon>
        <taxon>Actinobacillus</taxon>
    </lineage>
</organism>
<name>LIPA_ACTSZ</name>
<feature type="chain" id="PRO_1000071726" description="Lipoyl synthase">
    <location>
        <begin position="1"/>
        <end position="320"/>
    </location>
</feature>
<feature type="domain" description="Radical SAM core" evidence="2">
    <location>
        <begin position="79"/>
        <end position="296"/>
    </location>
</feature>
<feature type="binding site" evidence="1">
    <location>
        <position position="67"/>
    </location>
    <ligand>
        <name>[4Fe-4S] cluster</name>
        <dbReference type="ChEBI" id="CHEBI:49883"/>
        <label>1</label>
    </ligand>
</feature>
<feature type="binding site" evidence="1">
    <location>
        <position position="72"/>
    </location>
    <ligand>
        <name>[4Fe-4S] cluster</name>
        <dbReference type="ChEBI" id="CHEBI:49883"/>
        <label>1</label>
    </ligand>
</feature>
<feature type="binding site" evidence="1">
    <location>
        <position position="78"/>
    </location>
    <ligand>
        <name>[4Fe-4S] cluster</name>
        <dbReference type="ChEBI" id="CHEBI:49883"/>
        <label>1</label>
    </ligand>
</feature>
<feature type="binding site" evidence="1">
    <location>
        <position position="93"/>
    </location>
    <ligand>
        <name>[4Fe-4S] cluster</name>
        <dbReference type="ChEBI" id="CHEBI:49883"/>
        <label>2</label>
        <note>4Fe-4S-S-AdoMet</note>
    </ligand>
</feature>
<feature type="binding site" evidence="1">
    <location>
        <position position="97"/>
    </location>
    <ligand>
        <name>[4Fe-4S] cluster</name>
        <dbReference type="ChEBI" id="CHEBI:49883"/>
        <label>2</label>
        <note>4Fe-4S-S-AdoMet</note>
    </ligand>
</feature>
<feature type="binding site" evidence="1">
    <location>
        <position position="100"/>
    </location>
    <ligand>
        <name>[4Fe-4S] cluster</name>
        <dbReference type="ChEBI" id="CHEBI:49883"/>
        <label>2</label>
        <note>4Fe-4S-S-AdoMet</note>
    </ligand>
</feature>
<feature type="binding site" evidence="1">
    <location>
        <position position="307"/>
    </location>
    <ligand>
        <name>[4Fe-4S] cluster</name>
        <dbReference type="ChEBI" id="CHEBI:49883"/>
        <label>1</label>
    </ligand>
</feature>
<protein>
    <recommendedName>
        <fullName evidence="1">Lipoyl synthase</fullName>
        <ecNumber evidence="1">2.8.1.8</ecNumber>
    </recommendedName>
    <alternativeName>
        <fullName evidence="1">Lip-syn</fullName>
        <shortName evidence="1">LS</shortName>
    </alternativeName>
    <alternativeName>
        <fullName evidence="1">Lipoate synthase</fullName>
    </alternativeName>
    <alternativeName>
        <fullName evidence="1">Lipoic acid synthase</fullName>
    </alternativeName>
    <alternativeName>
        <fullName evidence="1">Sulfur insertion protein LipA</fullName>
    </alternativeName>
</protein>
<accession>A6VM79</accession>
<dbReference type="EC" id="2.8.1.8" evidence="1"/>
<dbReference type="EMBL" id="CP000746">
    <property type="protein sequence ID" value="ABR74076.1"/>
    <property type="molecule type" value="Genomic_DNA"/>
</dbReference>
<dbReference type="RefSeq" id="WP_012072456.1">
    <property type="nucleotide sequence ID" value="NC_009655.1"/>
</dbReference>
<dbReference type="SMR" id="A6VM79"/>
<dbReference type="STRING" id="339671.Asuc_0703"/>
<dbReference type="KEGG" id="asu:Asuc_0703"/>
<dbReference type="eggNOG" id="COG0320">
    <property type="taxonomic scope" value="Bacteria"/>
</dbReference>
<dbReference type="HOGENOM" id="CLU_033144_2_1_6"/>
<dbReference type="OrthoDB" id="9787898at2"/>
<dbReference type="UniPathway" id="UPA00538">
    <property type="reaction ID" value="UER00593"/>
</dbReference>
<dbReference type="Proteomes" id="UP000001114">
    <property type="component" value="Chromosome"/>
</dbReference>
<dbReference type="GO" id="GO:0005737">
    <property type="term" value="C:cytoplasm"/>
    <property type="evidence" value="ECO:0007669"/>
    <property type="project" value="UniProtKB-SubCell"/>
</dbReference>
<dbReference type="GO" id="GO:0051539">
    <property type="term" value="F:4 iron, 4 sulfur cluster binding"/>
    <property type="evidence" value="ECO:0007669"/>
    <property type="project" value="UniProtKB-UniRule"/>
</dbReference>
<dbReference type="GO" id="GO:0016992">
    <property type="term" value="F:lipoate synthase activity"/>
    <property type="evidence" value="ECO:0007669"/>
    <property type="project" value="UniProtKB-UniRule"/>
</dbReference>
<dbReference type="GO" id="GO:0046872">
    <property type="term" value="F:metal ion binding"/>
    <property type="evidence" value="ECO:0007669"/>
    <property type="project" value="UniProtKB-KW"/>
</dbReference>
<dbReference type="CDD" id="cd01335">
    <property type="entry name" value="Radical_SAM"/>
    <property type="match status" value="1"/>
</dbReference>
<dbReference type="FunFam" id="3.20.20.70:FF:000023">
    <property type="entry name" value="Lipoyl synthase"/>
    <property type="match status" value="1"/>
</dbReference>
<dbReference type="Gene3D" id="3.20.20.70">
    <property type="entry name" value="Aldolase class I"/>
    <property type="match status" value="1"/>
</dbReference>
<dbReference type="HAMAP" id="MF_00206">
    <property type="entry name" value="Lipoyl_synth"/>
    <property type="match status" value="1"/>
</dbReference>
<dbReference type="InterPro" id="IPR013785">
    <property type="entry name" value="Aldolase_TIM"/>
</dbReference>
<dbReference type="InterPro" id="IPR006638">
    <property type="entry name" value="Elp3/MiaA/NifB-like_rSAM"/>
</dbReference>
<dbReference type="InterPro" id="IPR003698">
    <property type="entry name" value="Lipoyl_synth"/>
</dbReference>
<dbReference type="InterPro" id="IPR007197">
    <property type="entry name" value="rSAM"/>
</dbReference>
<dbReference type="NCBIfam" id="TIGR00510">
    <property type="entry name" value="lipA"/>
    <property type="match status" value="1"/>
</dbReference>
<dbReference type="NCBIfam" id="NF004019">
    <property type="entry name" value="PRK05481.1"/>
    <property type="match status" value="1"/>
</dbReference>
<dbReference type="NCBIfam" id="NF009544">
    <property type="entry name" value="PRK12928.1"/>
    <property type="match status" value="1"/>
</dbReference>
<dbReference type="PANTHER" id="PTHR10949">
    <property type="entry name" value="LIPOYL SYNTHASE"/>
    <property type="match status" value="1"/>
</dbReference>
<dbReference type="PANTHER" id="PTHR10949:SF0">
    <property type="entry name" value="LIPOYL SYNTHASE, MITOCHONDRIAL"/>
    <property type="match status" value="1"/>
</dbReference>
<dbReference type="Pfam" id="PF04055">
    <property type="entry name" value="Radical_SAM"/>
    <property type="match status" value="1"/>
</dbReference>
<dbReference type="PIRSF" id="PIRSF005963">
    <property type="entry name" value="Lipoyl_synth"/>
    <property type="match status" value="1"/>
</dbReference>
<dbReference type="SFLD" id="SFLDF00271">
    <property type="entry name" value="lipoyl_synthase"/>
    <property type="match status" value="1"/>
</dbReference>
<dbReference type="SFLD" id="SFLDG01058">
    <property type="entry name" value="lipoyl_synthase_like"/>
    <property type="match status" value="1"/>
</dbReference>
<dbReference type="SMART" id="SM00729">
    <property type="entry name" value="Elp3"/>
    <property type="match status" value="1"/>
</dbReference>
<dbReference type="SUPFAM" id="SSF102114">
    <property type="entry name" value="Radical SAM enzymes"/>
    <property type="match status" value="1"/>
</dbReference>
<dbReference type="PROSITE" id="PS51918">
    <property type="entry name" value="RADICAL_SAM"/>
    <property type="match status" value="1"/>
</dbReference>
<comment type="function">
    <text evidence="1">Catalyzes the radical-mediated insertion of two sulfur atoms into the C-6 and C-8 positions of the octanoyl moiety bound to the lipoyl domains of lipoate-dependent enzymes, thereby converting the octanoylated domains into lipoylated derivatives.</text>
</comment>
<comment type="catalytic activity">
    <reaction evidence="1">
        <text>[[Fe-S] cluster scaffold protein carrying a second [4Fe-4S](2+) cluster] + N(6)-octanoyl-L-lysyl-[protein] + 2 oxidized [2Fe-2S]-[ferredoxin] + 2 S-adenosyl-L-methionine + 4 H(+) = [[Fe-S] cluster scaffold protein] + N(6)-[(R)-dihydrolipoyl]-L-lysyl-[protein] + 4 Fe(3+) + 2 hydrogen sulfide + 2 5'-deoxyadenosine + 2 L-methionine + 2 reduced [2Fe-2S]-[ferredoxin]</text>
        <dbReference type="Rhea" id="RHEA:16585"/>
        <dbReference type="Rhea" id="RHEA-COMP:9928"/>
        <dbReference type="Rhea" id="RHEA-COMP:10000"/>
        <dbReference type="Rhea" id="RHEA-COMP:10001"/>
        <dbReference type="Rhea" id="RHEA-COMP:10475"/>
        <dbReference type="Rhea" id="RHEA-COMP:14568"/>
        <dbReference type="Rhea" id="RHEA-COMP:14569"/>
        <dbReference type="ChEBI" id="CHEBI:15378"/>
        <dbReference type="ChEBI" id="CHEBI:17319"/>
        <dbReference type="ChEBI" id="CHEBI:29034"/>
        <dbReference type="ChEBI" id="CHEBI:29919"/>
        <dbReference type="ChEBI" id="CHEBI:33722"/>
        <dbReference type="ChEBI" id="CHEBI:33737"/>
        <dbReference type="ChEBI" id="CHEBI:33738"/>
        <dbReference type="ChEBI" id="CHEBI:57844"/>
        <dbReference type="ChEBI" id="CHEBI:59789"/>
        <dbReference type="ChEBI" id="CHEBI:78809"/>
        <dbReference type="ChEBI" id="CHEBI:83100"/>
        <dbReference type="EC" id="2.8.1.8"/>
    </reaction>
</comment>
<comment type="cofactor">
    <cofactor evidence="1">
        <name>[4Fe-4S] cluster</name>
        <dbReference type="ChEBI" id="CHEBI:49883"/>
    </cofactor>
    <text evidence="1">Binds 2 [4Fe-4S] clusters per subunit. One cluster is coordinated with 3 cysteines and an exchangeable S-adenosyl-L-methionine.</text>
</comment>
<comment type="pathway">
    <text evidence="1">Protein modification; protein lipoylation via endogenous pathway; protein N(6)-(lipoyl)lysine from octanoyl-[acyl-carrier-protein]: step 2/2.</text>
</comment>
<comment type="subcellular location">
    <subcellularLocation>
        <location evidence="1">Cytoplasm</location>
    </subcellularLocation>
</comment>
<comment type="similarity">
    <text evidence="1">Belongs to the radical SAM superfamily. Lipoyl synthase family.</text>
</comment>
<keyword id="KW-0004">4Fe-4S</keyword>
<keyword id="KW-0963">Cytoplasm</keyword>
<keyword id="KW-0408">Iron</keyword>
<keyword id="KW-0411">Iron-sulfur</keyword>
<keyword id="KW-0479">Metal-binding</keyword>
<keyword id="KW-1185">Reference proteome</keyword>
<keyword id="KW-0949">S-adenosyl-L-methionine</keyword>
<keyword id="KW-0808">Transferase</keyword>